<gene>
    <name type="ordered locus">MIMI_L631</name>
</gene>
<organism>
    <name type="scientific">Acanthamoeba polyphaga mimivirus</name>
    <name type="common">APMV</name>
    <dbReference type="NCBI Taxonomy" id="212035"/>
    <lineage>
        <taxon>Viruses</taxon>
        <taxon>Varidnaviria</taxon>
        <taxon>Bamfordvirae</taxon>
        <taxon>Nucleocytoviricota</taxon>
        <taxon>Megaviricetes</taxon>
        <taxon>Imitervirales</taxon>
        <taxon>Mimiviridae</taxon>
        <taxon>Megamimivirinae</taxon>
        <taxon>Mimivirus</taxon>
        <taxon>Mimivirus bradfordmassiliense</taxon>
    </lineage>
</organism>
<protein>
    <recommendedName>
        <fullName>Uncharacterized protein L631</fullName>
    </recommendedName>
</protein>
<feature type="chain" id="PRO_0000244005" description="Uncharacterized protein L631">
    <location>
        <begin position="1"/>
        <end position="219"/>
    </location>
</feature>
<feature type="transmembrane region" description="Helical" evidence="1">
    <location>
        <begin position="126"/>
        <end position="146"/>
    </location>
</feature>
<feature type="transmembrane region" description="Helical" evidence="1">
    <location>
        <begin position="153"/>
        <end position="173"/>
    </location>
</feature>
<feature type="transmembrane region" description="Helical" evidence="1">
    <location>
        <begin position="192"/>
        <end position="212"/>
    </location>
</feature>
<feature type="region of interest" description="Disordered" evidence="2">
    <location>
        <begin position="70"/>
        <end position="102"/>
    </location>
</feature>
<feature type="coiled-coil region" evidence="1">
    <location>
        <begin position="96"/>
        <end position="120"/>
    </location>
</feature>
<feature type="compositionally biased region" description="Basic and acidic residues" evidence="2">
    <location>
        <begin position="73"/>
        <end position="101"/>
    </location>
</feature>
<sequence>MSKNNSKSTQGAPLDYIPGITTINQPVFMDDSVLTMNPTMNVPTTNTLISPIPVTTSKSSQLDSAHPTVVHIGDNHPEPKNESKTQPKIESKKEPTLKQEEQTIQAEEEAQKIAKEETRESFLRYGGEIIIDIMLGILLGIAVNMLTDYIASIFGLKGTAKFPIQLVLIVIVLYMLRINPDISFPLRSRTDTYGVIFIPIFITAQRNFAIFFSELYNIF</sequence>
<organismHost>
    <name type="scientific">Acanthamoeba polyphaga</name>
    <name type="common">Amoeba</name>
    <dbReference type="NCBI Taxonomy" id="5757"/>
</organismHost>
<name>YL631_MIMIV</name>
<keyword id="KW-0175">Coiled coil</keyword>
<keyword id="KW-0472">Membrane</keyword>
<keyword id="KW-1185">Reference proteome</keyword>
<keyword id="KW-0812">Transmembrane</keyword>
<keyword id="KW-1133">Transmembrane helix</keyword>
<comment type="subcellular location">
    <subcellularLocation>
        <location evidence="3">Membrane</location>
        <topology evidence="3">Multi-pass membrane protein</topology>
    </subcellularLocation>
</comment>
<proteinExistence type="predicted"/>
<accession>Q5UR77</accession>
<reference key="1">
    <citation type="journal article" date="2004" name="Science">
        <title>The 1.2-megabase genome sequence of Mimivirus.</title>
        <authorList>
            <person name="Raoult D."/>
            <person name="Audic S."/>
            <person name="Robert C."/>
            <person name="Abergel C."/>
            <person name="Renesto P."/>
            <person name="Ogata H."/>
            <person name="La Scola B."/>
            <person name="Susan M."/>
            <person name="Claverie J.-M."/>
        </authorList>
    </citation>
    <scope>NUCLEOTIDE SEQUENCE [LARGE SCALE GENOMIC DNA]</scope>
    <source>
        <strain>Rowbotham-Bradford</strain>
    </source>
</reference>
<dbReference type="EMBL" id="AY653733">
    <property type="protein sequence ID" value="AAV50892.1"/>
    <property type="molecule type" value="Genomic_DNA"/>
</dbReference>
<dbReference type="KEGG" id="vg:9925273"/>
<dbReference type="Proteomes" id="UP000001134">
    <property type="component" value="Genome"/>
</dbReference>
<dbReference type="GO" id="GO:0016020">
    <property type="term" value="C:membrane"/>
    <property type="evidence" value="ECO:0007669"/>
    <property type="project" value="UniProtKB-SubCell"/>
</dbReference>
<evidence type="ECO:0000255" key="1"/>
<evidence type="ECO:0000256" key="2">
    <source>
        <dbReference type="SAM" id="MobiDB-lite"/>
    </source>
</evidence>
<evidence type="ECO:0000305" key="3"/>